<feature type="chain" id="PRO_0000092079" description="Putative ABC transporter ATP-binding protein MW2603">
    <location>
        <begin position="1"/>
        <end position="570"/>
    </location>
</feature>
<feature type="domain" description="ABC transporter 1" evidence="2">
    <location>
        <begin position="6"/>
        <end position="247"/>
    </location>
</feature>
<feature type="domain" description="ABC transporter 2" evidence="2">
    <location>
        <begin position="304"/>
        <end position="537"/>
    </location>
</feature>
<feature type="binding site" evidence="2">
    <location>
        <begin position="40"/>
        <end position="47"/>
    </location>
    <ligand>
        <name>ATP</name>
        <dbReference type="ChEBI" id="CHEBI:30616"/>
        <label>1</label>
    </ligand>
</feature>
<feature type="binding site" evidence="2">
    <location>
        <begin position="338"/>
        <end position="345"/>
    </location>
    <ligand>
        <name>ATP</name>
        <dbReference type="ChEBI" id="CHEBI:30616"/>
        <label>2</label>
    </ligand>
</feature>
<protein>
    <recommendedName>
        <fullName>Putative ABC transporter ATP-binding protein MW2603</fullName>
        <ecNumber>7.-.-.-</ecNumber>
    </recommendedName>
</protein>
<evidence type="ECO:0000250" key="1"/>
<evidence type="ECO:0000255" key="2">
    <source>
        <dbReference type="PROSITE-ProRule" id="PRU00434"/>
    </source>
</evidence>
<evidence type="ECO:0000305" key="3"/>
<organism>
    <name type="scientific">Staphylococcus aureus (strain MW2)</name>
    <dbReference type="NCBI Taxonomy" id="196620"/>
    <lineage>
        <taxon>Bacteria</taxon>
        <taxon>Bacillati</taxon>
        <taxon>Bacillota</taxon>
        <taxon>Bacilli</taxon>
        <taxon>Bacillales</taxon>
        <taxon>Staphylococcaceae</taxon>
        <taxon>Staphylococcus</taxon>
    </lineage>
</organism>
<comment type="function">
    <text evidence="1">Probably part of an ABC transporter complex. Responsible for energy coupling to the transport system (By similarity).</text>
</comment>
<comment type="subcellular location">
    <subcellularLocation>
        <location evidence="1">Cell membrane</location>
        <topology evidence="1">Peripheral membrane protein</topology>
    </subcellularLocation>
</comment>
<comment type="similarity">
    <text evidence="3">Belongs to the ABC transporter superfamily.</text>
</comment>
<gene>
    <name type="ordered locus">MW2603</name>
</gene>
<sequence length="570" mass="64187">MTEPIISFKDFSFQYHSQATPTLQKINVDIYPGEKVLVVGASGSGKSTFANCINGLIPFKTKGNITGELYINNQDATVSCLHDRSNVVGTVLQDTDGQFIGLTAAEDMAFLLENNCVEQDDMKKNVSYWAEKVGMIEHLNHRPQDLSGGQKQRVSLGGILIHRTPILILDEPLANLDPATGHETLRLLNNIHEETKSTMIIVEHRLEESLDDTFDRVLLFKDGKIIANTTPSDLLKSSKLKEAGIREPLYCTALKYAEVDVESIDNLANLRDVCMSEHVKFKVKKWIDETSANNDNKYKSEPLLELNEVCVQYSDYSNSVLNNVQLNVYRREMLSIVGHNGAGKSTLAKAICGFLDITGNIQFCNRGFNQLSISERSEFVGYVMQNPNHMISEKMIYDEVALGLRARGMKESDIKIRVENVLKICGLYAFRNWPIVALSYGQKKRVTIASVLVLNPEIIILDEPTAGQDFYHYNEIMSFLIELNRQGKTIIMITHDMHLLSEYSSRTVVLSKGQVVADTTPVLVLNDKKICEIASLRQTSLFEMAEYIGISEPQKLVQLFINHDRKVRRQ</sequence>
<reference key="1">
    <citation type="journal article" date="2002" name="Lancet">
        <title>Genome and virulence determinants of high virulence community-acquired MRSA.</title>
        <authorList>
            <person name="Baba T."/>
            <person name="Takeuchi F."/>
            <person name="Kuroda M."/>
            <person name="Yuzawa H."/>
            <person name="Aoki K."/>
            <person name="Oguchi A."/>
            <person name="Nagai Y."/>
            <person name="Iwama N."/>
            <person name="Asano K."/>
            <person name="Naimi T."/>
            <person name="Kuroda H."/>
            <person name="Cui L."/>
            <person name="Yamamoto K."/>
            <person name="Hiramatsu K."/>
        </authorList>
    </citation>
    <scope>NUCLEOTIDE SEQUENCE [LARGE SCALE GENOMIC DNA]</scope>
    <source>
        <strain>MW2</strain>
    </source>
</reference>
<proteinExistence type="inferred from homology"/>
<dbReference type="EC" id="7.-.-.-"/>
<dbReference type="EMBL" id="BA000033">
    <property type="protein sequence ID" value="BAB96468.1"/>
    <property type="molecule type" value="Genomic_DNA"/>
</dbReference>
<dbReference type="RefSeq" id="WP_000138645.1">
    <property type="nucleotide sequence ID" value="NC_003923.1"/>
</dbReference>
<dbReference type="SMR" id="Q8NUH8"/>
<dbReference type="KEGG" id="sam:MW2603"/>
<dbReference type="HOGENOM" id="CLU_000604_86_7_9"/>
<dbReference type="GO" id="GO:0043190">
    <property type="term" value="C:ATP-binding cassette (ABC) transporter complex"/>
    <property type="evidence" value="ECO:0007669"/>
    <property type="project" value="TreeGrafter"/>
</dbReference>
<dbReference type="GO" id="GO:0005524">
    <property type="term" value="F:ATP binding"/>
    <property type="evidence" value="ECO:0007669"/>
    <property type="project" value="UniProtKB-KW"/>
</dbReference>
<dbReference type="GO" id="GO:0016887">
    <property type="term" value="F:ATP hydrolysis activity"/>
    <property type="evidence" value="ECO:0007669"/>
    <property type="project" value="InterPro"/>
</dbReference>
<dbReference type="GO" id="GO:0042626">
    <property type="term" value="F:ATPase-coupled transmembrane transporter activity"/>
    <property type="evidence" value="ECO:0007669"/>
    <property type="project" value="TreeGrafter"/>
</dbReference>
<dbReference type="CDD" id="cd03225">
    <property type="entry name" value="ABC_cobalt_CbiO_domain1"/>
    <property type="match status" value="2"/>
</dbReference>
<dbReference type="FunFam" id="3.40.50.300:FF:001422">
    <property type="entry name" value="Cobalt ABC transporter ATP-binding protein"/>
    <property type="match status" value="1"/>
</dbReference>
<dbReference type="FunFam" id="3.40.50.300:FF:000224">
    <property type="entry name" value="Energy-coupling factor transporter ATP-binding protein EcfA"/>
    <property type="match status" value="1"/>
</dbReference>
<dbReference type="Gene3D" id="3.40.50.300">
    <property type="entry name" value="P-loop containing nucleotide triphosphate hydrolases"/>
    <property type="match status" value="2"/>
</dbReference>
<dbReference type="InterPro" id="IPR003593">
    <property type="entry name" value="AAA+_ATPase"/>
</dbReference>
<dbReference type="InterPro" id="IPR022216">
    <property type="entry name" value="ABC_Co_transporter"/>
</dbReference>
<dbReference type="InterPro" id="IPR003439">
    <property type="entry name" value="ABC_transporter-like_ATP-bd"/>
</dbReference>
<dbReference type="InterPro" id="IPR017871">
    <property type="entry name" value="ABC_transporter-like_CS"/>
</dbReference>
<dbReference type="InterPro" id="IPR015856">
    <property type="entry name" value="ABC_transpr_CbiO/EcfA_su"/>
</dbReference>
<dbReference type="InterPro" id="IPR050095">
    <property type="entry name" value="ECF_ABC_transporter_ATP-bd"/>
</dbReference>
<dbReference type="InterPro" id="IPR027417">
    <property type="entry name" value="P-loop_NTPase"/>
</dbReference>
<dbReference type="NCBIfam" id="NF010167">
    <property type="entry name" value="PRK13648.1"/>
    <property type="match status" value="2"/>
</dbReference>
<dbReference type="PANTHER" id="PTHR43553:SF26">
    <property type="entry name" value="ABC TRANSPORTER ATP-BINDING PROTEIN BC_2655-RELATED"/>
    <property type="match status" value="1"/>
</dbReference>
<dbReference type="PANTHER" id="PTHR43553">
    <property type="entry name" value="HEAVY METAL TRANSPORTER"/>
    <property type="match status" value="1"/>
</dbReference>
<dbReference type="Pfam" id="PF00005">
    <property type="entry name" value="ABC_tran"/>
    <property type="match status" value="2"/>
</dbReference>
<dbReference type="Pfam" id="PF12558">
    <property type="entry name" value="DUF3744"/>
    <property type="match status" value="1"/>
</dbReference>
<dbReference type="SMART" id="SM00382">
    <property type="entry name" value="AAA"/>
    <property type="match status" value="2"/>
</dbReference>
<dbReference type="SUPFAM" id="SSF52540">
    <property type="entry name" value="P-loop containing nucleoside triphosphate hydrolases"/>
    <property type="match status" value="2"/>
</dbReference>
<dbReference type="PROSITE" id="PS00211">
    <property type="entry name" value="ABC_TRANSPORTER_1"/>
    <property type="match status" value="2"/>
</dbReference>
<dbReference type="PROSITE" id="PS50893">
    <property type="entry name" value="ABC_TRANSPORTER_2"/>
    <property type="match status" value="2"/>
</dbReference>
<name>Y2603_STAAW</name>
<accession>Q8NUH8</accession>
<keyword id="KW-0067">ATP-binding</keyword>
<keyword id="KW-1003">Cell membrane</keyword>
<keyword id="KW-0472">Membrane</keyword>
<keyword id="KW-0547">Nucleotide-binding</keyword>
<keyword id="KW-0677">Repeat</keyword>
<keyword id="KW-1278">Translocase</keyword>
<keyword id="KW-0813">Transport</keyword>